<reference key="1">
    <citation type="journal article" date="2002" name="Nature">
        <title>The genome sequence of Schizosaccharomyces pombe.</title>
        <authorList>
            <person name="Wood V."/>
            <person name="Gwilliam R."/>
            <person name="Rajandream M.A."/>
            <person name="Lyne M.H."/>
            <person name="Lyne R."/>
            <person name="Stewart A."/>
            <person name="Sgouros J.G."/>
            <person name="Peat N."/>
            <person name="Hayles J."/>
            <person name="Baker S.G."/>
            <person name="Basham D."/>
            <person name="Bowman S."/>
            <person name="Brooks K."/>
            <person name="Brown D."/>
            <person name="Brown S."/>
            <person name="Chillingworth T."/>
            <person name="Churcher C.M."/>
            <person name="Collins M."/>
            <person name="Connor R."/>
            <person name="Cronin A."/>
            <person name="Davis P."/>
            <person name="Feltwell T."/>
            <person name="Fraser A."/>
            <person name="Gentles S."/>
            <person name="Goble A."/>
            <person name="Hamlin N."/>
            <person name="Harris D.E."/>
            <person name="Hidalgo J."/>
            <person name="Hodgson G."/>
            <person name="Holroyd S."/>
            <person name="Hornsby T."/>
            <person name="Howarth S."/>
            <person name="Huckle E.J."/>
            <person name="Hunt S."/>
            <person name="Jagels K."/>
            <person name="James K.D."/>
            <person name="Jones L."/>
            <person name="Jones M."/>
            <person name="Leather S."/>
            <person name="McDonald S."/>
            <person name="McLean J."/>
            <person name="Mooney P."/>
            <person name="Moule S."/>
            <person name="Mungall K.L."/>
            <person name="Murphy L.D."/>
            <person name="Niblett D."/>
            <person name="Odell C."/>
            <person name="Oliver K."/>
            <person name="O'Neil S."/>
            <person name="Pearson D."/>
            <person name="Quail M.A."/>
            <person name="Rabbinowitsch E."/>
            <person name="Rutherford K.M."/>
            <person name="Rutter S."/>
            <person name="Saunders D."/>
            <person name="Seeger K."/>
            <person name="Sharp S."/>
            <person name="Skelton J."/>
            <person name="Simmonds M.N."/>
            <person name="Squares R."/>
            <person name="Squares S."/>
            <person name="Stevens K."/>
            <person name="Taylor K."/>
            <person name="Taylor R.G."/>
            <person name="Tivey A."/>
            <person name="Walsh S.V."/>
            <person name="Warren T."/>
            <person name="Whitehead S."/>
            <person name="Woodward J.R."/>
            <person name="Volckaert G."/>
            <person name="Aert R."/>
            <person name="Robben J."/>
            <person name="Grymonprez B."/>
            <person name="Weltjens I."/>
            <person name="Vanstreels E."/>
            <person name="Rieger M."/>
            <person name="Schaefer M."/>
            <person name="Mueller-Auer S."/>
            <person name="Gabel C."/>
            <person name="Fuchs M."/>
            <person name="Duesterhoeft A."/>
            <person name="Fritzc C."/>
            <person name="Holzer E."/>
            <person name="Moestl D."/>
            <person name="Hilbert H."/>
            <person name="Borzym K."/>
            <person name="Langer I."/>
            <person name="Beck A."/>
            <person name="Lehrach H."/>
            <person name="Reinhardt R."/>
            <person name="Pohl T.M."/>
            <person name="Eger P."/>
            <person name="Zimmermann W."/>
            <person name="Wedler H."/>
            <person name="Wambutt R."/>
            <person name="Purnelle B."/>
            <person name="Goffeau A."/>
            <person name="Cadieu E."/>
            <person name="Dreano S."/>
            <person name="Gloux S."/>
            <person name="Lelaure V."/>
            <person name="Mottier S."/>
            <person name="Galibert F."/>
            <person name="Aves S.J."/>
            <person name="Xiang Z."/>
            <person name="Hunt C."/>
            <person name="Moore K."/>
            <person name="Hurst S.M."/>
            <person name="Lucas M."/>
            <person name="Rochet M."/>
            <person name="Gaillardin C."/>
            <person name="Tallada V.A."/>
            <person name="Garzon A."/>
            <person name="Thode G."/>
            <person name="Daga R.R."/>
            <person name="Cruzado L."/>
            <person name="Jimenez J."/>
            <person name="Sanchez M."/>
            <person name="del Rey F."/>
            <person name="Benito J."/>
            <person name="Dominguez A."/>
            <person name="Revuelta J.L."/>
            <person name="Moreno S."/>
            <person name="Armstrong J."/>
            <person name="Forsburg S.L."/>
            <person name="Cerutti L."/>
            <person name="Lowe T."/>
            <person name="McCombie W.R."/>
            <person name="Paulsen I."/>
            <person name="Potashkin J."/>
            <person name="Shpakovski G.V."/>
            <person name="Ussery D."/>
            <person name="Barrell B.G."/>
            <person name="Nurse P."/>
        </authorList>
    </citation>
    <scope>NUCLEOTIDE SEQUENCE [LARGE SCALE GENOMIC DNA]</scope>
    <source>
        <strain>972 / ATCC 24843</strain>
    </source>
</reference>
<reference key="2">
    <citation type="journal article" date="2011" name="Science">
        <title>Comparative functional genomics of the fission yeasts.</title>
        <authorList>
            <person name="Rhind N."/>
            <person name="Chen Z."/>
            <person name="Yassour M."/>
            <person name="Thompson D.A."/>
            <person name="Haas B.J."/>
            <person name="Habib N."/>
            <person name="Wapinski I."/>
            <person name="Roy S."/>
            <person name="Lin M.F."/>
            <person name="Heiman D.I."/>
            <person name="Young S.K."/>
            <person name="Furuya K."/>
            <person name="Guo Y."/>
            <person name="Pidoux A."/>
            <person name="Chen H.M."/>
            <person name="Robbertse B."/>
            <person name="Goldberg J.M."/>
            <person name="Aoki K."/>
            <person name="Bayne E.H."/>
            <person name="Berlin A.M."/>
            <person name="Desjardins C.A."/>
            <person name="Dobbs E."/>
            <person name="Dukaj L."/>
            <person name="Fan L."/>
            <person name="FitzGerald M.G."/>
            <person name="French C."/>
            <person name="Gujja S."/>
            <person name="Hansen K."/>
            <person name="Keifenheim D."/>
            <person name="Levin J.Z."/>
            <person name="Mosher R.A."/>
            <person name="Mueller C.A."/>
            <person name="Pfiffner J."/>
            <person name="Priest M."/>
            <person name="Russ C."/>
            <person name="Smialowska A."/>
            <person name="Swoboda P."/>
            <person name="Sykes S.M."/>
            <person name="Vaughn M."/>
            <person name="Vengrova S."/>
            <person name="Yoder R."/>
            <person name="Zeng Q."/>
            <person name="Allshire R."/>
            <person name="Baulcombe D."/>
            <person name="Birren B.W."/>
            <person name="Brown W."/>
            <person name="Ekwall K."/>
            <person name="Kellis M."/>
            <person name="Leatherwood J."/>
            <person name="Levin H."/>
            <person name="Margalit H."/>
            <person name="Martienssen R."/>
            <person name="Nieduszynski C.A."/>
            <person name="Spatafora J.W."/>
            <person name="Friedman N."/>
            <person name="Dalgaard J.Z."/>
            <person name="Baumann P."/>
            <person name="Niki H."/>
            <person name="Regev A."/>
            <person name="Nusbaum C."/>
        </authorList>
    </citation>
    <scope>REVISION OF GENE MODEL</scope>
</reference>
<reference key="3">
    <citation type="journal article" date="2006" name="Nat. Biotechnol.">
        <title>ORFeome cloning and global analysis of protein localization in the fission yeast Schizosaccharomyces pombe.</title>
        <authorList>
            <person name="Matsuyama A."/>
            <person name="Arai R."/>
            <person name="Yashiroda Y."/>
            <person name="Shirai A."/>
            <person name="Kamata A."/>
            <person name="Sekido S."/>
            <person name="Kobayashi Y."/>
            <person name="Hashimoto A."/>
            <person name="Hamamoto M."/>
            <person name="Hiraoka Y."/>
            <person name="Horinouchi S."/>
            <person name="Yoshida M."/>
        </authorList>
    </citation>
    <scope>SUBCELLULAR LOCATION [LARGE SCALE ANALYSIS]</scope>
</reference>
<protein>
    <recommendedName>
        <fullName>Uncharacterized protein C17A2.08c</fullName>
    </recommendedName>
</protein>
<accession>O13758</accession>
<gene>
    <name type="ORF">SPAC17A2.08c</name>
</gene>
<organism>
    <name type="scientific">Schizosaccharomyces pombe (strain 972 / ATCC 24843)</name>
    <name type="common">Fission yeast</name>
    <dbReference type="NCBI Taxonomy" id="284812"/>
    <lineage>
        <taxon>Eukaryota</taxon>
        <taxon>Fungi</taxon>
        <taxon>Dikarya</taxon>
        <taxon>Ascomycota</taxon>
        <taxon>Taphrinomycotina</taxon>
        <taxon>Schizosaccharomycetes</taxon>
        <taxon>Schizosaccharomycetales</taxon>
        <taxon>Schizosaccharomycetaceae</taxon>
        <taxon>Schizosaccharomyces</taxon>
    </lineage>
</organism>
<sequence length="361" mass="41875">MRRYLKKAKPKIVQTSDNEEEKHEENLNVSQSNKNANRRKTKAKEKNSGKFRVKYENEEGDDDGEDSQIPLIPKVKKQSSFHSVDDLISRRMDALSHESGYSNAYVDELKRKSRQTPSEFTKKEEDSSTKESELQTRSSPPLPVNTSLEWNMLNQGIPEEAMIKELKDREGRKRNIAMMTDNYISLETGDQLMLAQNHKEEKLLQTEDEIQDEGYSGFENYVEESEKLQEIYHHSSESLRTRSIQMAVDQKNMEMELDDEDIAEPIQSWEHTQIKKGAFGESPAFTNGLSVKLPNILTMDEQIQRLKEAIASEKLQQEERSQIIKSLMEEELEINEQEEKIKHSFIDLDKTLLNNLTKSKS</sequence>
<evidence type="ECO:0000255" key="1"/>
<evidence type="ECO:0000256" key="2">
    <source>
        <dbReference type="SAM" id="MobiDB-lite"/>
    </source>
</evidence>
<evidence type="ECO:0000269" key="3">
    <source>
    </source>
</evidence>
<evidence type="ECO:0007829" key="4">
    <source>
        <dbReference type="PDB" id="9ESI"/>
    </source>
</evidence>
<dbReference type="EMBL" id="CU329670">
    <property type="protein sequence ID" value="CAB16562.2"/>
    <property type="molecule type" value="Genomic_DNA"/>
</dbReference>
<dbReference type="PIR" id="T37809">
    <property type="entry name" value="T37809"/>
</dbReference>
<dbReference type="PDB" id="9ESI">
    <property type="method" value="EM"/>
    <property type="resolution" value="3.10 A"/>
    <property type="chains" value="n=1-361"/>
</dbReference>
<dbReference type="PDBsum" id="9ESI"/>
<dbReference type="EMDB" id="EMD-19942"/>
<dbReference type="SMR" id="O13758"/>
<dbReference type="BioGRID" id="278732">
    <property type="interactions" value="50"/>
</dbReference>
<dbReference type="FunCoup" id="O13758">
    <property type="interactions" value="10"/>
</dbReference>
<dbReference type="IntAct" id="O13758">
    <property type="interactions" value="1"/>
</dbReference>
<dbReference type="STRING" id="284812.O13758"/>
<dbReference type="iPTMnet" id="O13758"/>
<dbReference type="PaxDb" id="4896-SPAC17A2.08c.1"/>
<dbReference type="EnsemblFungi" id="SPAC17A2.08c.1">
    <property type="protein sequence ID" value="SPAC17A2.08c.1:pep"/>
    <property type="gene ID" value="SPAC17A2.08c"/>
</dbReference>
<dbReference type="KEGG" id="spo:2542263"/>
<dbReference type="PomBase" id="SPAC17A2.08c"/>
<dbReference type="VEuPathDB" id="FungiDB:SPAC17A2.08c"/>
<dbReference type="eggNOG" id="ENOG502S5MV">
    <property type="taxonomic scope" value="Eukaryota"/>
</dbReference>
<dbReference type="HOGENOM" id="CLU_931141_0_0_1"/>
<dbReference type="InParanoid" id="O13758"/>
<dbReference type="OMA" id="WEQAQIQ"/>
<dbReference type="PRO" id="PR:O13758"/>
<dbReference type="Proteomes" id="UP000002485">
    <property type="component" value="Chromosome I"/>
</dbReference>
<dbReference type="GO" id="GO:0005737">
    <property type="term" value="C:cytoplasm"/>
    <property type="evidence" value="ECO:0007005"/>
    <property type="project" value="PomBase"/>
</dbReference>
<dbReference type="GO" id="GO:0005829">
    <property type="term" value="C:cytosol"/>
    <property type="evidence" value="ECO:0007005"/>
    <property type="project" value="PomBase"/>
</dbReference>
<dbReference type="GO" id="GO:0005634">
    <property type="term" value="C:nucleus"/>
    <property type="evidence" value="ECO:0007005"/>
    <property type="project" value="PomBase"/>
</dbReference>
<dbReference type="GO" id="GO:0071008">
    <property type="term" value="C:U2-type post-mRNA release spliceosomal complex"/>
    <property type="evidence" value="ECO:0000266"/>
    <property type="project" value="PomBase"/>
</dbReference>
<dbReference type="GO" id="GO:0000390">
    <property type="term" value="P:spliceosomal complex disassembly"/>
    <property type="evidence" value="ECO:0000266"/>
    <property type="project" value="PomBase"/>
</dbReference>
<dbReference type="InterPro" id="IPR028211">
    <property type="entry name" value="Ntr2"/>
</dbReference>
<dbReference type="Pfam" id="PF15458">
    <property type="entry name" value="NTR2"/>
    <property type="match status" value="1"/>
</dbReference>
<proteinExistence type="evidence at protein level"/>
<comment type="subcellular location">
    <subcellularLocation>
        <location evidence="3">Cytoplasm</location>
    </subcellularLocation>
    <subcellularLocation>
        <location evidence="3">Nucleus</location>
    </subcellularLocation>
</comment>
<feature type="chain" id="PRO_0000304056" description="Uncharacterized protein C17A2.08c">
    <location>
        <begin position="1"/>
        <end position="361"/>
    </location>
</feature>
<feature type="region of interest" description="Disordered" evidence="2">
    <location>
        <begin position="1"/>
        <end position="82"/>
    </location>
</feature>
<feature type="region of interest" description="Disordered" evidence="2">
    <location>
        <begin position="94"/>
        <end position="147"/>
    </location>
</feature>
<feature type="coiled-coil region" evidence="1">
    <location>
        <begin position="295"/>
        <end position="349"/>
    </location>
</feature>
<feature type="compositionally biased region" description="Basic residues" evidence="2">
    <location>
        <begin position="1"/>
        <end position="10"/>
    </location>
</feature>
<feature type="compositionally biased region" description="Basic and acidic residues" evidence="2">
    <location>
        <begin position="44"/>
        <end position="57"/>
    </location>
</feature>
<feature type="compositionally biased region" description="Basic and acidic residues" evidence="2">
    <location>
        <begin position="120"/>
        <end position="134"/>
    </location>
</feature>
<feature type="compositionally biased region" description="Polar residues" evidence="2">
    <location>
        <begin position="135"/>
        <end position="147"/>
    </location>
</feature>
<feature type="helix" evidence="4">
    <location>
        <begin position="298"/>
        <end position="324"/>
    </location>
</feature>
<name>YF28_SCHPO</name>
<keyword id="KW-0002">3D-structure</keyword>
<keyword id="KW-0175">Coiled coil</keyword>
<keyword id="KW-0963">Cytoplasm</keyword>
<keyword id="KW-0539">Nucleus</keyword>
<keyword id="KW-1185">Reference proteome</keyword>